<keyword id="KW-0963">Cytoplasm</keyword>
<keyword id="KW-0458">Lysosome</keyword>
<keyword id="KW-1185">Reference proteome</keyword>
<organism>
    <name type="scientific">Xenopus tropicalis</name>
    <name type="common">Western clawed frog</name>
    <name type="synonym">Silurana tropicalis</name>
    <dbReference type="NCBI Taxonomy" id="8364"/>
    <lineage>
        <taxon>Eukaryota</taxon>
        <taxon>Metazoa</taxon>
        <taxon>Chordata</taxon>
        <taxon>Craniata</taxon>
        <taxon>Vertebrata</taxon>
        <taxon>Euteleostomi</taxon>
        <taxon>Amphibia</taxon>
        <taxon>Batrachia</taxon>
        <taxon>Anura</taxon>
        <taxon>Pipoidea</taxon>
        <taxon>Pipidae</taxon>
        <taxon>Xenopodinae</taxon>
        <taxon>Xenopus</taxon>
        <taxon>Silurana</taxon>
    </lineage>
</organism>
<name>LTOR5_XENTR</name>
<dbReference type="EMBL" id="BC157166">
    <property type="protein sequence ID" value="AAI57167.1"/>
    <property type="molecule type" value="mRNA"/>
</dbReference>
<dbReference type="RefSeq" id="NP_001107345.1">
    <property type="nucleotide sequence ID" value="NM_001113873.1"/>
</dbReference>
<dbReference type="SMR" id="A9UL91"/>
<dbReference type="FunCoup" id="A9UL91">
    <property type="interactions" value="827"/>
</dbReference>
<dbReference type="STRING" id="8364.ENSXETP00000032580"/>
<dbReference type="PaxDb" id="8364-ENSXETP00000054622"/>
<dbReference type="GeneID" id="100135168"/>
<dbReference type="KEGG" id="xtr:100135168"/>
<dbReference type="AGR" id="Xenbase:XB-GENE-950195"/>
<dbReference type="CTD" id="10542"/>
<dbReference type="Xenbase" id="XB-GENE-950195">
    <property type="gene designation" value="lamtor5"/>
</dbReference>
<dbReference type="eggNOG" id="ENOG502S5TK">
    <property type="taxonomic scope" value="Eukaryota"/>
</dbReference>
<dbReference type="HOGENOM" id="CLU_164970_0_0_1"/>
<dbReference type="InParanoid" id="A9UL91"/>
<dbReference type="OMA" id="GIIYKQT"/>
<dbReference type="OrthoDB" id="76862at2759"/>
<dbReference type="PhylomeDB" id="A9UL91"/>
<dbReference type="TreeFam" id="TF324433"/>
<dbReference type="Reactome" id="R-XTR-1632852">
    <property type="pathway name" value="Macroautophagy"/>
</dbReference>
<dbReference type="Reactome" id="R-XTR-165159">
    <property type="pathway name" value="MTOR signalling"/>
</dbReference>
<dbReference type="Reactome" id="R-XTR-380972">
    <property type="pathway name" value="Energy dependent regulation of mTOR by LKB1-AMPK"/>
</dbReference>
<dbReference type="Reactome" id="R-XTR-5628897">
    <property type="pathway name" value="TP53 Regulates Metabolic Genes"/>
</dbReference>
<dbReference type="Reactome" id="R-XTR-9639288">
    <property type="pathway name" value="Amino acids regulate mTORC1"/>
</dbReference>
<dbReference type="Proteomes" id="UP000008143">
    <property type="component" value="Chromosome 2"/>
</dbReference>
<dbReference type="Bgee" id="ENSXETG00000040956">
    <property type="expression patterns" value="Expressed in testis and 13 other cell types or tissues"/>
</dbReference>
<dbReference type="GO" id="GO:0005765">
    <property type="term" value="C:lysosomal membrane"/>
    <property type="evidence" value="ECO:0000250"/>
    <property type="project" value="UniProtKB"/>
</dbReference>
<dbReference type="GO" id="GO:0005764">
    <property type="term" value="C:lysosome"/>
    <property type="evidence" value="ECO:0000250"/>
    <property type="project" value="UniProtKB"/>
</dbReference>
<dbReference type="GO" id="GO:0071986">
    <property type="term" value="C:Ragulator complex"/>
    <property type="evidence" value="ECO:0000250"/>
    <property type="project" value="UniProtKB"/>
</dbReference>
<dbReference type="GO" id="GO:0071230">
    <property type="term" value="P:cellular response to amino acid stimulus"/>
    <property type="evidence" value="ECO:0000250"/>
    <property type="project" value="UniProtKB"/>
</dbReference>
<dbReference type="GO" id="GO:0043066">
    <property type="term" value="P:negative regulation of apoptotic process"/>
    <property type="evidence" value="ECO:0007669"/>
    <property type="project" value="InterPro"/>
</dbReference>
<dbReference type="GO" id="GO:0032008">
    <property type="term" value="P:positive regulation of TOR signaling"/>
    <property type="evidence" value="ECO:0000250"/>
    <property type="project" value="UniProtKB"/>
</dbReference>
<dbReference type="GO" id="GO:1904263">
    <property type="term" value="P:positive regulation of TORC1 signaling"/>
    <property type="evidence" value="ECO:0000250"/>
    <property type="project" value="UniProtKB"/>
</dbReference>
<dbReference type="GO" id="GO:0061462">
    <property type="term" value="P:protein localization to lysosome"/>
    <property type="evidence" value="ECO:0000250"/>
    <property type="project" value="UniProtKB"/>
</dbReference>
<dbReference type="GO" id="GO:0008361">
    <property type="term" value="P:regulation of cell size"/>
    <property type="evidence" value="ECO:0000250"/>
    <property type="project" value="UniProtKB"/>
</dbReference>
<dbReference type="FunFam" id="3.30.450.30:FF:000005">
    <property type="entry name" value="Ragulator complex protein LAMTOR5 homolog"/>
    <property type="match status" value="1"/>
</dbReference>
<dbReference type="Gene3D" id="3.30.450.30">
    <property type="entry name" value="Dynein light chain 2a, cytoplasmic"/>
    <property type="match status" value="1"/>
</dbReference>
<dbReference type="InterPro" id="IPR024135">
    <property type="entry name" value="LAMTOR5"/>
</dbReference>
<dbReference type="PANTHER" id="PTHR13342">
    <property type="entry name" value="RAGULATOR COMPLEX PROTEIN LAMTOR5"/>
    <property type="match status" value="1"/>
</dbReference>
<dbReference type="PANTHER" id="PTHR13342:SF2">
    <property type="entry name" value="RAGULATOR COMPLEX PROTEIN LAMTOR5"/>
    <property type="match status" value="1"/>
</dbReference>
<dbReference type="Pfam" id="PF16672">
    <property type="entry name" value="LAMTOR5"/>
    <property type="match status" value="1"/>
</dbReference>
<dbReference type="PRINTS" id="PR02092">
    <property type="entry name" value="HEPBVIRUSXIP"/>
</dbReference>
<feature type="chain" id="PRO_0000331597" description="Ragulator complex protein LAMTOR5">
    <location>
        <begin position="1"/>
        <end position="91"/>
    </location>
</feature>
<gene>
    <name type="primary">lamtor5</name>
    <name type="synonym">hbxip</name>
</gene>
<comment type="function">
    <text evidence="1">As part of the Ragulator complex it is involved in amino acid sensing and activation of mTORC1, a signaling complex promoting cell growth in response to growth factors, energy levels, and amino acids. Activated by amino acids through a mechanism involving the lysosomal V-ATPase, the Ragulator plays a dual role for the small GTPases Rag (RagA/RRAGA, RagB/RRAGB, RagC/RRAGC and/or RagD/RRAGD): it (1) acts as a guanine nucleotide exchange factor (GEF), activating the small GTPases Rag and (2) mediates recruitment of Rag GTPases to the lysosome membrane. Activated Ragulator and Rag GTPases function as a scaffold recruiting mTORC1 to lysosomes where it is in turn activated.</text>
</comment>
<comment type="subunit">
    <text evidence="1">Part of the Ragulator complex composed of lamtor1, lamtor2, lamtor3, lamtor4 and lamtor5. The Ragulator complex interacts with slc38a9; the probable amino acid sensor. Component of the lysosomal folliculin complex (LFC).</text>
</comment>
<comment type="subcellular location">
    <subcellularLocation>
        <location evidence="1">Cytoplasm</location>
    </subcellularLocation>
    <subcellularLocation>
        <location evidence="1">Lysosome</location>
    </subcellularLocation>
</comment>
<comment type="similarity">
    <text evidence="2">Belongs to the LAMTOR5 family.</text>
</comment>
<evidence type="ECO:0000250" key="1">
    <source>
        <dbReference type="UniProtKB" id="O43504"/>
    </source>
</evidence>
<evidence type="ECO:0000305" key="2"/>
<protein>
    <recommendedName>
        <fullName>Ragulator complex protein LAMTOR5</fullName>
    </recommendedName>
    <alternativeName>
        <fullName>Late endosomal/lysosomal adaptor and MAPK and MTOR activator 5</fullName>
    </alternativeName>
</protein>
<proteinExistence type="inferred from homology"/>
<sequence>MEAALEQHLEDTMKNPSIVGVLCTDSQGLSLGCCGSLSDKHAGVISILPQYAAKLTSDPTDVPVVCLESDNGIVMIQKHDHLTVAVHKVTS</sequence>
<accession>A9UL91</accession>
<reference key="1">
    <citation type="submission" date="2007-12" db="EMBL/GenBank/DDBJ databases">
        <authorList>
            <consortium name="NIH - Xenopus Gene Collection (XGC) project"/>
        </authorList>
    </citation>
    <scope>NUCLEOTIDE SEQUENCE [LARGE SCALE MRNA]</scope>
    <source>
        <tissue>Gastrula</tissue>
    </source>
</reference>